<sequence>MPGVVFDLDGTLVHSAPDIHAAVNRALAEEGAEPFSLAEITGFIGNGVPVLIKRVLAARGETPDGHRHAEMQDRFMKHYEADPTALTSVYPGAEAALRHLHSEGWRIALCTNKPYAASRQILSNFGILDLFDAIVGGDCLPQRKPDPAPLRAAAAALTEEVVLYVGDSEVDAATAEAAGLRFALFTEGYRHAPVHDLPHHGLFSHHDELPDLLRHLLA</sequence>
<comment type="function">
    <text evidence="1">Specifically catalyzes the dephosphorylation of 2-phosphoglycolate. Is involved in the dissimilation of the intracellular 2-phosphoglycolate formed during the DNA repair of 3'-phosphoglycolate ends, a major class of DNA lesions induced by oxidative stress.</text>
</comment>
<comment type="catalytic activity">
    <reaction evidence="1">
        <text>2-phosphoglycolate + H2O = glycolate + phosphate</text>
        <dbReference type="Rhea" id="RHEA:14369"/>
        <dbReference type="ChEBI" id="CHEBI:15377"/>
        <dbReference type="ChEBI" id="CHEBI:29805"/>
        <dbReference type="ChEBI" id="CHEBI:43474"/>
        <dbReference type="ChEBI" id="CHEBI:58033"/>
        <dbReference type="EC" id="3.1.3.18"/>
    </reaction>
</comment>
<comment type="cofactor">
    <cofactor evidence="1">
        <name>Mg(2+)</name>
        <dbReference type="ChEBI" id="CHEBI:18420"/>
    </cofactor>
</comment>
<comment type="pathway">
    <text evidence="1">Organic acid metabolism; glycolate biosynthesis; glycolate from 2-phosphoglycolate: step 1/1.</text>
</comment>
<comment type="similarity">
    <text evidence="1">Belongs to the HAD-like hydrolase superfamily. CbbY/CbbZ/Gph/YieH family.</text>
</comment>
<proteinExistence type="inferred from homology"/>
<accession>A4WW31</accession>
<reference key="1">
    <citation type="submission" date="2007-04" db="EMBL/GenBank/DDBJ databases">
        <title>Complete sequence of chromosome of Rhodobacter sphaeroides ATCC 17025.</title>
        <authorList>
            <consortium name="US DOE Joint Genome Institute"/>
            <person name="Copeland A."/>
            <person name="Lucas S."/>
            <person name="Lapidus A."/>
            <person name="Barry K."/>
            <person name="Detter J.C."/>
            <person name="Glavina del Rio T."/>
            <person name="Hammon N."/>
            <person name="Israni S."/>
            <person name="Dalin E."/>
            <person name="Tice H."/>
            <person name="Pitluck S."/>
            <person name="Chertkov O."/>
            <person name="Brettin T."/>
            <person name="Bruce D."/>
            <person name="Han C."/>
            <person name="Schmutz J."/>
            <person name="Larimer F."/>
            <person name="Land M."/>
            <person name="Hauser L."/>
            <person name="Kyrpides N."/>
            <person name="Kim E."/>
            <person name="Richardson P."/>
            <person name="Mackenzie C."/>
            <person name="Choudhary M."/>
            <person name="Donohue T.J."/>
            <person name="Kaplan S."/>
        </authorList>
    </citation>
    <scope>NUCLEOTIDE SEQUENCE [LARGE SCALE GENOMIC DNA]</scope>
    <source>
        <strain>ATCC 17025 / ATH 2.4.3</strain>
    </source>
</reference>
<protein>
    <recommendedName>
        <fullName evidence="1">Phosphoglycolate phosphatase</fullName>
        <shortName evidence="1">PGP</shortName>
        <shortName evidence="1">PGPase</shortName>
        <ecNumber evidence="1">3.1.3.18</ecNumber>
    </recommendedName>
</protein>
<keyword id="KW-0113">Calvin cycle</keyword>
<keyword id="KW-0119">Carbohydrate metabolism</keyword>
<keyword id="KW-0378">Hydrolase</keyword>
<keyword id="KW-0460">Magnesium</keyword>
<keyword id="KW-0479">Metal-binding</keyword>
<keyword id="KW-0602">Photosynthesis</keyword>
<dbReference type="EC" id="3.1.3.18" evidence="1"/>
<dbReference type="EMBL" id="CP000661">
    <property type="protein sequence ID" value="ABP71595.1"/>
    <property type="molecule type" value="Genomic_DNA"/>
</dbReference>
<dbReference type="SMR" id="A4WW31"/>
<dbReference type="STRING" id="349102.Rsph17025_2708"/>
<dbReference type="KEGG" id="rsq:Rsph17025_2708"/>
<dbReference type="eggNOG" id="COG0546">
    <property type="taxonomic scope" value="Bacteria"/>
</dbReference>
<dbReference type="HOGENOM" id="CLU_045011_19_1_5"/>
<dbReference type="BioCyc" id="RSPH349102:G1G8M-2788-MONOMER"/>
<dbReference type="UniPathway" id="UPA00865">
    <property type="reaction ID" value="UER00834"/>
</dbReference>
<dbReference type="GO" id="GO:0005829">
    <property type="term" value="C:cytosol"/>
    <property type="evidence" value="ECO:0007669"/>
    <property type="project" value="TreeGrafter"/>
</dbReference>
<dbReference type="GO" id="GO:0046872">
    <property type="term" value="F:metal ion binding"/>
    <property type="evidence" value="ECO:0007669"/>
    <property type="project" value="UniProtKB-KW"/>
</dbReference>
<dbReference type="GO" id="GO:0008967">
    <property type="term" value="F:phosphoglycolate phosphatase activity"/>
    <property type="evidence" value="ECO:0007669"/>
    <property type="project" value="UniProtKB-UniRule"/>
</dbReference>
<dbReference type="GO" id="GO:0006281">
    <property type="term" value="P:DNA repair"/>
    <property type="evidence" value="ECO:0007669"/>
    <property type="project" value="TreeGrafter"/>
</dbReference>
<dbReference type="GO" id="GO:0046295">
    <property type="term" value="P:glycolate biosynthetic process"/>
    <property type="evidence" value="ECO:0007669"/>
    <property type="project" value="UniProtKB-UniRule"/>
</dbReference>
<dbReference type="GO" id="GO:0019253">
    <property type="term" value="P:reductive pentose-phosphate cycle"/>
    <property type="evidence" value="ECO:0007669"/>
    <property type="project" value="UniProtKB-KW"/>
</dbReference>
<dbReference type="CDD" id="cd07512">
    <property type="entry name" value="HAD_PGPase"/>
    <property type="match status" value="1"/>
</dbReference>
<dbReference type="Gene3D" id="3.40.50.1000">
    <property type="entry name" value="HAD superfamily/HAD-like"/>
    <property type="match status" value="1"/>
</dbReference>
<dbReference type="Gene3D" id="1.10.150.240">
    <property type="entry name" value="Putative phosphatase, domain 2"/>
    <property type="match status" value="1"/>
</dbReference>
<dbReference type="HAMAP" id="MF_00495">
    <property type="entry name" value="GPH_hydrolase_bact"/>
    <property type="match status" value="1"/>
</dbReference>
<dbReference type="InterPro" id="IPR050155">
    <property type="entry name" value="HAD-like_hydrolase_sf"/>
</dbReference>
<dbReference type="InterPro" id="IPR036412">
    <property type="entry name" value="HAD-like_sf"/>
</dbReference>
<dbReference type="InterPro" id="IPR006439">
    <property type="entry name" value="HAD-SF_hydro_IA"/>
</dbReference>
<dbReference type="InterPro" id="IPR041492">
    <property type="entry name" value="HAD_2"/>
</dbReference>
<dbReference type="InterPro" id="IPR023214">
    <property type="entry name" value="HAD_sf"/>
</dbReference>
<dbReference type="InterPro" id="IPR023198">
    <property type="entry name" value="PGP-like_dom2"/>
</dbReference>
<dbReference type="InterPro" id="IPR037512">
    <property type="entry name" value="PGPase_prok"/>
</dbReference>
<dbReference type="NCBIfam" id="TIGR01549">
    <property type="entry name" value="HAD-SF-IA-v1"/>
    <property type="match status" value="1"/>
</dbReference>
<dbReference type="NCBIfam" id="TIGR01449">
    <property type="entry name" value="PGP_bact"/>
    <property type="match status" value="1"/>
</dbReference>
<dbReference type="PANTHER" id="PTHR43434">
    <property type="entry name" value="PHOSPHOGLYCOLATE PHOSPHATASE"/>
    <property type="match status" value="1"/>
</dbReference>
<dbReference type="PANTHER" id="PTHR43434:SF1">
    <property type="entry name" value="PHOSPHOGLYCOLATE PHOSPHATASE"/>
    <property type="match status" value="1"/>
</dbReference>
<dbReference type="Pfam" id="PF13419">
    <property type="entry name" value="HAD_2"/>
    <property type="match status" value="1"/>
</dbReference>
<dbReference type="PRINTS" id="PR00413">
    <property type="entry name" value="HADHALOGNASE"/>
</dbReference>
<dbReference type="SFLD" id="SFLDG01135">
    <property type="entry name" value="C1.5.6:_HAD__Beta-PGM__Phospha"/>
    <property type="match status" value="1"/>
</dbReference>
<dbReference type="SFLD" id="SFLDG01129">
    <property type="entry name" value="C1.5:_HAD__Beta-PGM__Phosphata"/>
    <property type="match status" value="1"/>
</dbReference>
<dbReference type="SUPFAM" id="SSF56784">
    <property type="entry name" value="HAD-like"/>
    <property type="match status" value="1"/>
</dbReference>
<organism>
    <name type="scientific">Cereibacter sphaeroides (strain ATCC 17025 / ATH 2.4.3)</name>
    <name type="common">Rhodobacter sphaeroides</name>
    <dbReference type="NCBI Taxonomy" id="349102"/>
    <lineage>
        <taxon>Bacteria</taxon>
        <taxon>Pseudomonadati</taxon>
        <taxon>Pseudomonadota</taxon>
        <taxon>Alphaproteobacteria</taxon>
        <taxon>Rhodobacterales</taxon>
        <taxon>Paracoccaceae</taxon>
        <taxon>Cereibacter</taxon>
    </lineage>
</organism>
<name>GPH_CERS5</name>
<feature type="chain" id="PRO_1000050596" description="Phosphoglycolate phosphatase">
    <location>
        <begin position="1"/>
        <end position="218"/>
    </location>
</feature>
<feature type="active site" description="Nucleophile" evidence="1">
    <location>
        <position position="7"/>
    </location>
</feature>
<feature type="binding site" evidence="1">
    <location>
        <position position="7"/>
    </location>
    <ligand>
        <name>Mg(2+)</name>
        <dbReference type="ChEBI" id="CHEBI:18420"/>
    </ligand>
</feature>
<feature type="binding site" evidence="1">
    <location>
        <position position="9"/>
    </location>
    <ligand>
        <name>Mg(2+)</name>
        <dbReference type="ChEBI" id="CHEBI:18420"/>
    </ligand>
</feature>
<feature type="binding site" evidence="1">
    <location>
        <position position="167"/>
    </location>
    <ligand>
        <name>Mg(2+)</name>
        <dbReference type="ChEBI" id="CHEBI:18420"/>
    </ligand>
</feature>
<gene>
    <name evidence="1" type="primary">cbbZ</name>
    <name type="ordered locus">Rsph17025_2708</name>
</gene>
<evidence type="ECO:0000255" key="1">
    <source>
        <dbReference type="HAMAP-Rule" id="MF_00495"/>
    </source>
</evidence>